<keyword id="KW-0012">Acyltransferase</keyword>
<keyword id="KW-0963">Cytoplasm</keyword>
<keyword id="KW-0903">Direct protein sequencing</keyword>
<keyword id="KW-0484">Methanogenesis</keyword>
<keyword id="KW-0554">One-carbon metabolism</keyword>
<keyword id="KW-1185">Reference proteome</keyword>
<keyword id="KW-0808">Transferase</keyword>
<accession>Q49168</accession>
<accession>E3GYF3</accession>
<protein>
    <recommendedName>
        <fullName evidence="1">Formylmethanofuran--tetrahydromethanopterin formyltransferase</fullName>
        <shortName evidence="1">Ftr</shortName>
        <ecNumber evidence="1">2.3.1.101</ecNumber>
    </recommendedName>
    <alternativeName>
        <fullName evidence="1">H4MPT formyltransferase</fullName>
    </alternativeName>
</protein>
<gene>
    <name evidence="1" type="primary">ftr</name>
    <name type="ordered locus">Mfer_0535</name>
</gene>
<sequence length="297" mass="31832">MKVNGVEIEDTFAEAFDIKVSRILVTAASKRLAKIAAREATGYGTSVIGCPAEAGIDTYIPPKNTPDQRPGFTIIICNPSKKKLDHELLERVGMTILTAPTAAAFDALENAEEKVNTGFKLKFFGDGYEKEGEVQGRKVHIIPIMSGEFIVEEKFGIKSGVAGGNFFIMAETQGSALLAAEMAVDAIKSVEGVMTPFPGGIVASGSKVGSKKYDFLDASTNEKMCVTLKDEIEDSEVPEDVNGIYEIVIDGIDEESVKKAMKVGIEAACKVPGVKKISAGNYGGKLGKYKLHLHDLF</sequence>
<dbReference type="EC" id="2.3.1.101" evidence="1"/>
<dbReference type="EMBL" id="X70784">
    <property type="protein sequence ID" value="CAA50057.1"/>
    <property type="molecule type" value="Genomic_DNA"/>
</dbReference>
<dbReference type="EMBL" id="CP002278">
    <property type="protein sequence ID" value="ADP77335.1"/>
    <property type="molecule type" value="Genomic_DNA"/>
</dbReference>
<dbReference type="PIR" id="S41564">
    <property type="entry name" value="S41564"/>
</dbReference>
<dbReference type="SMR" id="Q49168"/>
<dbReference type="STRING" id="523846.Mfer_0535"/>
<dbReference type="KEGG" id="mfv:Mfer_0535"/>
<dbReference type="HOGENOM" id="CLU_081314_0_0_2"/>
<dbReference type="OrthoDB" id="81373at2157"/>
<dbReference type="BRENDA" id="2.3.1.101">
    <property type="organism ID" value="3286"/>
</dbReference>
<dbReference type="UniPathway" id="UPA00640">
    <property type="reaction ID" value="UER00693"/>
</dbReference>
<dbReference type="Proteomes" id="UP000002315">
    <property type="component" value="Chromosome"/>
</dbReference>
<dbReference type="GO" id="GO:0005737">
    <property type="term" value="C:cytoplasm"/>
    <property type="evidence" value="ECO:0007669"/>
    <property type="project" value="UniProtKB-SubCell"/>
</dbReference>
<dbReference type="GO" id="GO:0030270">
    <property type="term" value="F:formylmethanofuran-tetrahydromethanopterin N-formyltransferase activity"/>
    <property type="evidence" value="ECO:0007669"/>
    <property type="project" value="UniProtKB-UniRule"/>
</dbReference>
<dbReference type="GO" id="GO:0019386">
    <property type="term" value="P:methanogenesis, from carbon dioxide"/>
    <property type="evidence" value="ECO:0007669"/>
    <property type="project" value="UniProtKB-UniRule"/>
</dbReference>
<dbReference type="GO" id="GO:0006730">
    <property type="term" value="P:one-carbon metabolic process"/>
    <property type="evidence" value="ECO:0007669"/>
    <property type="project" value="UniProtKB-UniRule"/>
</dbReference>
<dbReference type="Gene3D" id="3.30.70.520">
    <property type="match status" value="2"/>
</dbReference>
<dbReference type="HAMAP" id="MF_00579">
    <property type="entry name" value="FTR"/>
    <property type="match status" value="1"/>
</dbReference>
<dbReference type="InterPro" id="IPR014053">
    <property type="entry name" value="ForMFR_H4MPT_ForTrfase"/>
</dbReference>
<dbReference type="InterPro" id="IPR002770">
    <property type="entry name" value="ForMFR_H4MPT_ForTrfase_C"/>
</dbReference>
<dbReference type="InterPro" id="IPR023447">
    <property type="entry name" value="ForMFR_H4MPT_ForTrfase_fd-like"/>
</dbReference>
<dbReference type="InterPro" id="IPR022667">
    <property type="entry name" value="ForMFR_H4MPT_ForTrfase_N"/>
</dbReference>
<dbReference type="NCBIfam" id="TIGR03119">
    <property type="entry name" value="one_C_fhcD"/>
    <property type="match status" value="1"/>
</dbReference>
<dbReference type="NCBIfam" id="NF002554">
    <property type="entry name" value="PRK02114.1"/>
    <property type="match status" value="1"/>
</dbReference>
<dbReference type="Pfam" id="PF01913">
    <property type="entry name" value="FTR"/>
    <property type="match status" value="1"/>
</dbReference>
<dbReference type="Pfam" id="PF02741">
    <property type="entry name" value="FTR_C"/>
    <property type="match status" value="1"/>
</dbReference>
<dbReference type="PIRSF" id="PIRSF006414">
    <property type="entry name" value="Ftr_formyl_trnsf"/>
    <property type="match status" value="1"/>
</dbReference>
<dbReference type="SUPFAM" id="SSF55112">
    <property type="entry name" value="Formylmethanofuran:tetrahydromethanopterin formyltransferase"/>
    <property type="match status" value="2"/>
</dbReference>
<evidence type="ECO:0000255" key="1">
    <source>
        <dbReference type="HAMAP-Rule" id="MF_00579"/>
    </source>
</evidence>
<reference key="1">
    <citation type="journal article" date="1994" name="Mol. Gen. Genet.">
        <title>Cloning, sequencing and transcript analysis of the gene encoding formylmethanofuran: tetrahydromethanopterin formyltransferase from the hyperthermophilic Methanothermus fervidus.</title>
        <authorList>
            <person name="Lehmacher A."/>
        </authorList>
    </citation>
    <scope>NUCLEOTIDE SEQUENCE [GENOMIC DNA]</scope>
    <scope>PROTEIN SEQUENCE OF 1-37</scope>
    <source>
        <strain>ATCC 43054 / DSM 2088 / JCM 10308 / V24 S</strain>
    </source>
</reference>
<reference key="2">
    <citation type="journal article" date="2010" name="Stand. Genomic Sci.">
        <title>Complete genome sequence of Methanothermus fervidus type strain (V24S).</title>
        <authorList>
            <person name="Anderson I."/>
            <person name="Djao O.D."/>
            <person name="Misra M."/>
            <person name="Chertkov O."/>
            <person name="Nolan M."/>
            <person name="Lucas S."/>
            <person name="Lapidus A."/>
            <person name="Del Rio T.G."/>
            <person name="Tice H."/>
            <person name="Cheng J.F."/>
            <person name="Tapia R."/>
            <person name="Han C."/>
            <person name="Goodwin L."/>
            <person name="Pitluck S."/>
            <person name="Liolios K."/>
            <person name="Ivanova N."/>
            <person name="Mavromatis K."/>
            <person name="Mikhailova N."/>
            <person name="Pati A."/>
            <person name="Brambilla E."/>
            <person name="Chen A."/>
            <person name="Palaniappan K."/>
            <person name="Land M."/>
            <person name="Hauser L."/>
            <person name="Chang Y.J."/>
            <person name="Jeffries C.D."/>
            <person name="Sikorski J."/>
            <person name="Spring S."/>
            <person name="Rohde M."/>
            <person name="Eichinger K."/>
            <person name="Huber H."/>
            <person name="Wirth R."/>
            <person name="Goker M."/>
            <person name="Detter J.C."/>
            <person name="Woyke T."/>
            <person name="Bristow J."/>
            <person name="Eisen J.A."/>
            <person name="Markowitz V."/>
            <person name="Hugenholtz P."/>
            <person name="Klenk H.P."/>
            <person name="Kyrpides N.C."/>
        </authorList>
    </citation>
    <scope>NUCLEOTIDE SEQUENCE [LARGE SCALE GENOMIC DNA]</scope>
    <source>
        <strain>ATCC 43054 / DSM 2088 / JCM 10308 / V24 S</strain>
    </source>
</reference>
<comment type="function">
    <text evidence="1">Catalyzes the reversible transfer of a formyl group from formylmethanofuran (formyl-MFR) to tetrahydromethanopterin (H(4)MPT) to produce 5-formyl tetrahydromethanopterin (5-formyl-H(4)MPT) and methanofuran (MFR).</text>
</comment>
<comment type="catalytic activity">
    <reaction evidence="1">
        <text>N-formylmethanofuran + 5,6,7,8-tetrahydromethanopterin + H(+) = N(5)-formyl-5,6,7,8-tetrahydromethanopterin + methanofuran</text>
        <dbReference type="Rhea" id="RHEA:18061"/>
        <dbReference type="ChEBI" id="CHEBI:15378"/>
        <dbReference type="ChEBI" id="CHEBI:57727"/>
        <dbReference type="ChEBI" id="CHEBI:58018"/>
        <dbReference type="ChEBI" id="CHEBI:58103"/>
        <dbReference type="ChEBI" id="CHEBI:58151"/>
        <dbReference type="EC" id="2.3.1.101"/>
    </reaction>
</comment>
<comment type="pathway">
    <text evidence="1">One-carbon metabolism; methanogenesis from CO(2); 5,10-methenyl-5,6,7,8-tetrahydromethanopterin from CO(2): step 2/3.</text>
</comment>
<comment type="subunit">
    <text evidence="1">Homotetramer.</text>
</comment>
<comment type="subcellular location">
    <subcellularLocation>
        <location evidence="1">Cytoplasm</location>
    </subcellularLocation>
</comment>
<comment type="similarity">
    <text evidence="1">Belongs to the FTR family.</text>
</comment>
<name>FTR_METFV</name>
<organism>
    <name type="scientific">Methanothermus fervidus (strain ATCC 43054 / DSM 2088 / JCM 10308 / V24 S)</name>
    <dbReference type="NCBI Taxonomy" id="523846"/>
    <lineage>
        <taxon>Archaea</taxon>
        <taxon>Methanobacteriati</taxon>
        <taxon>Methanobacteriota</taxon>
        <taxon>Methanomada group</taxon>
        <taxon>Methanobacteria</taxon>
        <taxon>Methanobacteriales</taxon>
        <taxon>Methanothermaceae</taxon>
        <taxon>Methanothermus</taxon>
    </lineage>
</organism>
<proteinExistence type="evidence at protein level"/>
<feature type="chain" id="PRO_0000138118" description="Formylmethanofuran--tetrahydromethanopterin formyltransferase">
    <location>
        <begin position="1"/>
        <end position="297"/>
    </location>
</feature>